<evidence type="ECO:0000250" key="1">
    <source>
        <dbReference type="UniProtKB" id="Q6PBM7"/>
    </source>
</evidence>
<evidence type="ECO:0000255" key="2"/>
<evidence type="ECO:0000256" key="3">
    <source>
        <dbReference type="SAM" id="MobiDB-lite"/>
    </source>
</evidence>
<evidence type="ECO:0000305" key="4"/>
<organism>
    <name type="scientific">Xenopus tropicalis</name>
    <name type="common">Western clawed frog</name>
    <name type="synonym">Silurana tropicalis</name>
    <dbReference type="NCBI Taxonomy" id="8364"/>
    <lineage>
        <taxon>Eukaryota</taxon>
        <taxon>Metazoa</taxon>
        <taxon>Chordata</taxon>
        <taxon>Craniata</taxon>
        <taxon>Vertebrata</taxon>
        <taxon>Euteleostomi</taxon>
        <taxon>Amphibia</taxon>
        <taxon>Batrachia</taxon>
        <taxon>Anura</taxon>
        <taxon>Pipoidea</taxon>
        <taxon>Pipidae</taxon>
        <taxon>Xenopodinae</taxon>
        <taxon>Xenopus</taxon>
        <taxon>Silurana</taxon>
    </lineage>
</organism>
<proteinExistence type="evidence at transcript level"/>
<sequence length="337" mass="38600">MASALYACTKCHQRYPFEELSQGQQLCKECRIAHPIVKCTYCRSEFQQESKTNTICKKCAQNVKQFGTPKPCQYCNIIAAFIGTKCQRCTNSEKKYGPPQTCEQCKQQCAFDRKEEGRRKVDGKLLCWLCTLSYKRVLQKTKEQRKSLGSTHSNSSSSSLTEKDQHHSKHHHHHHHHHRHSSSHHKISSLSPEPEQGIWKQSHKSSTVIQNETPKKKPKLEFKPSNGDSSSINQSTDSGGTDNFVLISQLKEEVMSLKRLLQQRDQTILEKDKKLTELKADFQYQENNLRTKMNGMDKAHKDFVEQLQGKNRELLKQVAALSKGKKFDKSGSILTSP</sequence>
<gene>
    <name type="primary">fam76b</name>
    <name type="ORF">TGas096i10.1</name>
</gene>
<keyword id="KW-0175">Coiled coil</keyword>
<keyword id="KW-1185">Reference proteome</keyword>
<reference key="1">
    <citation type="submission" date="2006-03" db="EMBL/GenBank/DDBJ databases">
        <authorList>
            <consortium name="Sanger Xenopus tropicalis EST/cDNA project"/>
        </authorList>
    </citation>
    <scope>NUCLEOTIDE SEQUENCE [LARGE SCALE MRNA]</scope>
    <source>
        <tissue>Gastrula</tissue>
    </source>
</reference>
<reference key="2">
    <citation type="submission" date="2005-04" db="EMBL/GenBank/DDBJ databases">
        <authorList>
            <consortium name="NIH - Xenopus Gene Collection (XGC) project"/>
        </authorList>
    </citation>
    <scope>NUCLEOTIDE SEQUENCE [LARGE SCALE MRNA]</scope>
    <source>
        <tissue>Embryo</tissue>
    </source>
</reference>
<feature type="chain" id="PRO_0000245767" description="Protein FAM76B">
    <location>
        <begin position="1"/>
        <end position="337"/>
    </location>
</feature>
<feature type="region of interest" description="Disordered" evidence="3">
    <location>
        <begin position="143"/>
        <end position="241"/>
    </location>
</feature>
<feature type="coiled-coil region" evidence="2">
    <location>
        <begin position="301"/>
        <end position="326"/>
    </location>
</feature>
<feature type="compositionally biased region" description="Low complexity" evidence="3">
    <location>
        <begin position="147"/>
        <end position="159"/>
    </location>
</feature>
<feature type="compositionally biased region" description="Basic residues" evidence="3">
    <location>
        <begin position="166"/>
        <end position="187"/>
    </location>
</feature>
<feature type="compositionally biased region" description="Basic and acidic residues" evidence="3">
    <location>
        <begin position="213"/>
        <end position="222"/>
    </location>
</feature>
<feature type="compositionally biased region" description="Polar residues" evidence="3">
    <location>
        <begin position="226"/>
        <end position="241"/>
    </location>
</feature>
<feature type="sequence conflict" description="In Ref. 1; CAJ82001." evidence="4" ref="1">
    <location>
        <position position="231"/>
    </location>
</feature>
<accession>Q566M1</accession>
<accession>Q28GC5</accession>
<protein>
    <recommendedName>
        <fullName>Protein FAM76B</fullName>
    </recommendedName>
</protein>
<dbReference type="EMBL" id="CR761446">
    <property type="protein sequence ID" value="CAJ82001.1"/>
    <property type="molecule type" value="mRNA"/>
</dbReference>
<dbReference type="EMBL" id="BC093457">
    <property type="protein sequence ID" value="AAH93457.1"/>
    <property type="molecule type" value="mRNA"/>
</dbReference>
<dbReference type="RefSeq" id="NP_001015947.2">
    <property type="nucleotide sequence ID" value="NM_001015947.2"/>
</dbReference>
<dbReference type="RefSeq" id="XP_012812369.1">
    <property type="nucleotide sequence ID" value="XM_012956915.2"/>
</dbReference>
<dbReference type="RefSeq" id="XP_017946719.1">
    <property type="nucleotide sequence ID" value="XM_018091230.2"/>
</dbReference>
<dbReference type="SMR" id="Q566M1"/>
<dbReference type="FunCoup" id="Q566M1">
    <property type="interactions" value="2171"/>
</dbReference>
<dbReference type="PaxDb" id="8364-ENSXETP00000015410"/>
<dbReference type="DNASU" id="548701"/>
<dbReference type="GeneID" id="548701"/>
<dbReference type="KEGG" id="xtr:548701"/>
<dbReference type="AGR" id="Xenbase:XB-GENE-5850810"/>
<dbReference type="CTD" id="143684"/>
<dbReference type="Xenbase" id="XB-GENE-5850810">
    <property type="gene designation" value="fam76b"/>
</dbReference>
<dbReference type="eggNOG" id="KOG3990">
    <property type="taxonomic scope" value="Eukaryota"/>
</dbReference>
<dbReference type="HOGENOM" id="CLU_029220_1_0_1"/>
<dbReference type="InParanoid" id="Q566M1"/>
<dbReference type="OMA" id="CACAYKR"/>
<dbReference type="OrthoDB" id="3689at2759"/>
<dbReference type="PhylomeDB" id="Q566M1"/>
<dbReference type="TreeFam" id="TF313644"/>
<dbReference type="Proteomes" id="UP000008143">
    <property type="component" value="Chromosome 2"/>
</dbReference>
<dbReference type="Bgee" id="ENSXETG00000007080">
    <property type="expression patterns" value="Expressed in 2-cell stage embryo and 13 other cell types or tissues"/>
</dbReference>
<dbReference type="ExpressionAtlas" id="Q566M1">
    <property type="expression patterns" value="baseline"/>
</dbReference>
<dbReference type="GO" id="GO:0016607">
    <property type="term" value="C:nuclear speck"/>
    <property type="evidence" value="ECO:0000250"/>
    <property type="project" value="UniProtKB"/>
</dbReference>
<dbReference type="InterPro" id="IPR032017">
    <property type="entry name" value="FAM76"/>
</dbReference>
<dbReference type="PANTHER" id="PTHR46176">
    <property type="entry name" value="LD21662P"/>
    <property type="match status" value="1"/>
</dbReference>
<dbReference type="PANTHER" id="PTHR46176:SF3">
    <property type="entry name" value="PROTEIN FAM76B"/>
    <property type="match status" value="1"/>
</dbReference>
<dbReference type="Pfam" id="PF16046">
    <property type="entry name" value="FAM76"/>
    <property type="match status" value="1"/>
</dbReference>
<comment type="function">
    <text evidence="1">Plays a role in hematopoiesis and immune system development, and participates in the inflammatory response.</text>
</comment>
<comment type="similarity">
    <text evidence="4">Belongs to the FAM76 family.</text>
</comment>
<name>FA76B_XENTR</name>